<name>PROB_RIPO1</name>
<comment type="function">
    <text evidence="1">Catalyzes the transfer of a phosphate group to glutamate to form L-glutamate 5-phosphate.</text>
</comment>
<comment type="catalytic activity">
    <reaction evidence="1">
        <text>L-glutamate + ATP = L-glutamyl 5-phosphate + ADP</text>
        <dbReference type="Rhea" id="RHEA:14877"/>
        <dbReference type="ChEBI" id="CHEBI:29985"/>
        <dbReference type="ChEBI" id="CHEBI:30616"/>
        <dbReference type="ChEBI" id="CHEBI:58274"/>
        <dbReference type="ChEBI" id="CHEBI:456216"/>
        <dbReference type="EC" id="2.7.2.11"/>
    </reaction>
</comment>
<comment type="pathway">
    <text evidence="1">Amino-acid biosynthesis; L-proline biosynthesis; L-glutamate 5-semialdehyde from L-glutamate: step 1/2.</text>
</comment>
<comment type="subcellular location">
    <subcellularLocation>
        <location evidence="1">Cytoplasm</location>
    </subcellularLocation>
</comment>
<comment type="similarity">
    <text evidence="1">Belongs to the glutamate 5-kinase family.</text>
</comment>
<evidence type="ECO:0000255" key="1">
    <source>
        <dbReference type="HAMAP-Rule" id="MF_00456"/>
    </source>
</evidence>
<reference key="1">
    <citation type="journal article" date="2011" name="MBio">
        <title>Novel metabolic attributes of the genus Cyanothece, comprising a group of unicellular nitrogen-fixing Cyanobacteria.</title>
        <authorList>
            <person name="Bandyopadhyay A."/>
            <person name="Elvitigala T."/>
            <person name="Welsh E."/>
            <person name="Stockel J."/>
            <person name="Liberton M."/>
            <person name="Min H."/>
            <person name="Sherman L.A."/>
            <person name="Pakrasi H.B."/>
        </authorList>
    </citation>
    <scope>NUCLEOTIDE SEQUENCE [LARGE SCALE GENOMIC DNA]</scope>
    <source>
        <strain>PCC 8801 / RF-1</strain>
    </source>
</reference>
<gene>
    <name evidence="1" type="primary">proB</name>
    <name type="ordered locus">PCC8801_0986</name>
</gene>
<accession>B7JZW9</accession>
<organism>
    <name type="scientific">Rippkaea orientalis (strain PCC 8801 / RF-1)</name>
    <name type="common">Cyanothece sp. (strain PCC 8801)</name>
    <dbReference type="NCBI Taxonomy" id="41431"/>
    <lineage>
        <taxon>Bacteria</taxon>
        <taxon>Bacillati</taxon>
        <taxon>Cyanobacteriota</taxon>
        <taxon>Cyanophyceae</taxon>
        <taxon>Oscillatoriophycideae</taxon>
        <taxon>Chroococcales</taxon>
        <taxon>Aphanothecaceae</taxon>
        <taxon>Rippkaea</taxon>
        <taxon>Rippkaea orientalis</taxon>
    </lineage>
</organism>
<sequence length="369" mass="39762">MKQTIVIKIGTSSLTQPESGKLALSTIAALVETLTQLRQLGHRIILVSSGAVGVGCSRLNLKERPKKMAMKQAIAAVGQGRLIRVYDDLFNTLGQPIAQVLLTRRELIERSCYVNASNTFESLLELGVIPIVNENDTVAIEELKFGDNDTLSALVASLIHADWLFLLTDVDRLYSADPRLVPDAKPITLVNSDEFAQLQVKAGDRGSQWGTGGMATKLAAARIATGAGVRTVITHGGKPSNLLKILQGEAIGTQFEPQTRNDSARKRWIAYGLLPTGKLYLDSGAIRAICHQGKSLLAAGIIKVEGQFEASEAVQLCDETGQEMARGIVNYNSLEIDKIKGHHSDEISQILGYGGAETVVHRDNLSVNG</sequence>
<protein>
    <recommendedName>
        <fullName evidence="1">Glutamate 5-kinase</fullName>
        <ecNumber evidence="1">2.7.2.11</ecNumber>
    </recommendedName>
    <alternativeName>
        <fullName evidence="1">Gamma-glutamyl kinase</fullName>
        <shortName evidence="1">GK</shortName>
    </alternativeName>
</protein>
<dbReference type="EC" id="2.7.2.11" evidence="1"/>
<dbReference type="EMBL" id="CP001287">
    <property type="protein sequence ID" value="ACK65062.1"/>
    <property type="molecule type" value="Genomic_DNA"/>
</dbReference>
<dbReference type="RefSeq" id="WP_012594337.1">
    <property type="nucleotide sequence ID" value="NC_011726.1"/>
</dbReference>
<dbReference type="SMR" id="B7JZW9"/>
<dbReference type="STRING" id="41431.PCC8801_0986"/>
<dbReference type="KEGG" id="cyp:PCC8801_0986"/>
<dbReference type="eggNOG" id="COG0263">
    <property type="taxonomic scope" value="Bacteria"/>
</dbReference>
<dbReference type="HOGENOM" id="CLU_025400_2_0_3"/>
<dbReference type="OrthoDB" id="9804434at2"/>
<dbReference type="UniPathway" id="UPA00098">
    <property type="reaction ID" value="UER00359"/>
</dbReference>
<dbReference type="Proteomes" id="UP000008204">
    <property type="component" value="Chromosome"/>
</dbReference>
<dbReference type="GO" id="GO:0005829">
    <property type="term" value="C:cytosol"/>
    <property type="evidence" value="ECO:0007669"/>
    <property type="project" value="TreeGrafter"/>
</dbReference>
<dbReference type="GO" id="GO:0005524">
    <property type="term" value="F:ATP binding"/>
    <property type="evidence" value="ECO:0007669"/>
    <property type="project" value="UniProtKB-KW"/>
</dbReference>
<dbReference type="GO" id="GO:0004349">
    <property type="term" value="F:glutamate 5-kinase activity"/>
    <property type="evidence" value="ECO:0007669"/>
    <property type="project" value="UniProtKB-UniRule"/>
</dbReference>
<dbReference type="GO" id="GO:0003723">
    <property type="term" value="F:RNA binding"/>
    <property type="evidence" value="ECO:0007669"/>
    <property type="project" value="InterPro"/>
</dbReference>
<dbReference type="GO" id="GO:0055129">
    <property type="term" value="P:L-proline biosynthetic process"/>
    <property type="evidence" value="ECO:0007669"/>
    <property type="project" value="UniProtKB-UniRule"/>
</dbReference>
<dbReference type="CDD" id="cd04242">
    <property type="entry name" value="AAK_G5K_ProB"/>
    <property type="match status" value="1"/>
</dbReference>
<dbReference type="CDD" id="cd21157">
    <property type="entry name" value="PUA_G5K"/>
    <property type="match status" value="1"/>
</dbReference>
<dbReference type="FunFam" id="2.30.130.10:FF:000007">
    <property type="entry name" value="Glutamate 5-kinase"/>
    <property type="match status" value="1"/>
</dbReference>
<dbReference type="FunFam" id="3.40.1160.10:FF:000018">
    <property type="entry name" value="Glutamate 5-kinase"/>
    <property type="match status" value="1"/>
</dbReference>
<dbReference type="Gene3D" id="3.40.1160.10">
    <property type="entry name" value="Acetylglutamate kinase-like"/>
    <property type="match status" value="1"/>
</dbReference>
<dbReference type="Gene3D" id="2.30.130.10">
    <property type="entry name" value="PUA domain"/>
    <property type="match status" value="1"/>
</dbReference>
<dbReference type="HAMAP" id="MF_00456">
    <property type="entry name" value="ProB"/>
    <property type="match status" value="1"/>
</dbReference>
<dbReference type="InterPro" id="IPR036393">
    <property type="entry name" value="AceGlu_kinase-like_sf"/>
</dbReference>
<dbReference type="InterPro" id="IPR001048">
    <property type="entry name" value="Asp/Glu/Uridylate_kinase"/>
</dbReference>
<dbReference type="InterPro" id="IPR041739">
    <property type="entry name" value="G5K_ProB"/>
</dbReference>
<dbReference type="InterPro" id="IPR001057">
    <property type="entry name" value="Glu/AcGlu_kinase"/>
</dbReference>
<dbReference type="InterPro" id="IPR011529">
    <property type="entry name" value="Glu_5kinase"/>
</dbReference>
<dbReference type="InterPro" id="IPR005715">
    <property type="entry name" value="Glu_5kinase/COase_Synthase"/>
</dbReference>
<dbReference type="InterPro" id="IPR019797">
    <property type="entry name" value="Glutamate_5-kinase_CS"/>
</dbReference>
<dbReference type="InterPro" id="IPR002478">
    <property type="entry name" value="PUA"/>
</dbReference>
<dbReference type="InterPro" id="IPR015947">
    <property type="entry name" value="PUA-like_sf"/>
</dbReference>
<dbReference type="InterPro" id="IPR036974">
    <property type="entry name" value="PUA_sf"/>
</dbReference>
<dbReference type="NCBIfam" id="TIGR01027">
    <property type="entry name" value="proB"/>
    <property type="match status" value="1"/>
</dbReference>
<dbReference type="PANTHER" id="PTHR43654">
    <property type="entry name" value="GLUTAMATE 5-KINASE"/>
    <property type="match status" value="1"/>
</dbReference>
<dbReference type="PANTHER" id="PTHR43654:SF3">
    <property type="entry name" value="GLUTAMATE 5-KINASE"/>
    <property type="match status" value="1"/>
</dbReference>
<dbReference type="Pfam" id="PF00696">
    <property type="entry name" value="AA_kinase"/>
    <property type="match status" value="1"/>
</dbReference>
<dbReference type="Pfam" id="PF01472">
    <property type="entry name" value="PUA"/>
    <property type="match status" value="1"/>
</dbReference>
<dbReference type="PIRSF" id="PIRSF000729">
    <property type="entry name" value="GK"/>
    <property type="match status" value="1"/>
</dbReference>
<dbReference type="PRINTS" id="PR00474">
    <property type="entry name" value="GLU5KINASE"/>
</dbReference>
<dbReference type="SMART" id="SM00359">
    <property type="entry name" value="PUA"/>
    <property type="match status" value="1"/>
</dbReference>
<dbReference type="SUPFAM" id="SSF53633">
    <property type="entry name" value="Carbamate kinase-like"/>
    <property type="match status" value="1"/>
</dbReference>
<dbReference type="SUPFAM" id="SSF88697">
    <property type="entry name" value="PUA domain-like"/>
    <property type="match status" value="1"/>
</dbReference>
<dbReference type="PROSITE" id="PS00902">
    <property type="entry name" value="GLUTAMATE_5_KINASE"/>
    <property type="match status" value="1"/>
</dbReference>
<dbReference type="PROSITE" id="PS50890">
    <property type="entry name" value="PUA"/>
    <property type="match status" value="1"/>
</dbReference>
<feature type="chain" id="PRO_1000125224" description="Glutamate 5-kinase">
    <location>
        <begin position="1"/>
        <end position="369"/>
    </location>
</feature>
<feature type="domain" description="PUA" evidence="1">
    <location>
        <begin position="276"/>
        <end position="354"/>
    </location>
</feature>
<feature type="binding site" evidence="1">
    <location>
        <position position="8"/>
    </location>
    <ligand>
        <name>ATP</name>
        <dbReference type="ChEBI" id="CHEBI:30616"/>
    </ligand>
</feature>
<feature type="binding site" evidence="1">
    <location>
        <position position="49"/>
    </location>
    <ligand>
        <name>substrate</name>
    </ligand>
</feature>
<feature type="binding site" evidence="1">
    <location>
        <position position="136"/>
    </location>
    <ligand>
        <name>substrate</name>
    </ligand>
</feature>
<feature type="binding site" evidence="1">
    <location>
        <position position="148"/>
    </location>
    <ligand>
        <name>substrate</name>
    </ligand>
</feature>
<feature type="binding site" evidence="1">
    <location>
        <begin position="168"/>
        <end position="169"/>
    </location>
    <ligand>
        <name>ATP</name>
        <dbReference type="ChEBI" id="CHEBI:30616"/>
    </ligand>
</feature>
<feature type="binding site" evidence="1">
    <location>
        <begin position="211"/>
        <end position="217"/>
    </location>
    <ligand>
        <name>ATP</name>
        <dbReference type="ChEBI" id="CHEBI:30616"/>
    </ligand>
</feature>
<proteinExistence type="inferred from homology"/>
<keyword id="KW-0028">Amino-acid biosynthesis</keyword>
<keyword id="KW-0067">ATP-binding</keyword>
<keyword id="KW-0963">Cytoplasm</keyword>
<keyword id="KW-0418">Kinase</keyword>
<keyword id="KW-0547">Nucleotide-binding</keyword>
<keyword id="KW-0641">Proline biosynthesis</keyword>
<keyword id="KW-1185">Reference proteome</keyword>
<keyword id="KW-0808">Transferase</keyword>